<reference key="1">
    <citation type="journal article" date="1985" name="J. Mol. Biol.">
        <title>Sequence determination and genetic content of the short unique region in the genome of herpes simplex virus type 1.</title>
        <authorList>
            <person name="McGeoch D.J."/>
            <person name="Dolan A."/>
            <person name="Donald S."/>
            <person name="Rixon F.J."/>
        </authorList>
    </citation>
    <scope>NUCLEOTIDE SEQUENCE [GENOMIC DNA]</scope>
</reference>
<reference key="2">
    <citation type="journal article" date="1988" name="Trends Biochem. Sci.">
        <title>The herpesvirus protein kinase: a new departure in protein phosphorylation?</title>
        <authorList>
            <person name="Leader D.P."/>
            <person name="Purves F.C."/>
        </authorList>
    </citation>
    <scope>REVIEW</scope>
</reference>
<reference key="3">
    <citation type="journal article" date="1991" name="J. Virol.">
        <title>The herpes simplex virus 1 protein kinase encoded by the US3 gene mediates posttranslational modification of the phosphoprotein encoded by the UL34 gene.</title>
        <authorList>
            <person name="Purves F.C."/>
            <person name="Spector D."/>
            <person name="Roizman B."/>
        </authorList>
    </citation>
    <scope>FUNCTION IN PHOSPHORYLATION OF UL34</scope>
    <source>
        <strain>F</strain>
    </source>
</reference>
<reference key="4">
    <citation type="journal article" date="1997" name="Proc. Natl. Acad. Sci. U.S.A.">
        <title>The herpes simplex virus 1 protein kinase US3 is required for protection from apoptosis induced by the virus.</title>
        <authorList>
            <person name="Leopardi R."/>
            <person name="Van Sant C."/>
            <person name="Roizman B."/>
        </authorList>
    </citation>
    <scope>FUNCTION</scope>
    <source>
        <strain>F</strain>
    </source>
</reference>
<reference key="5">
    <citation type="journal article" date="2005" name="J. Virol.">
        <title>Identification of proteins phosphorylated directly by the Us3 protein kinase encoded by herpes simplex virus 1.</title>
        <authorList>
            <person name="Kato A."/>
            <person name="Yamamoto M."/>
            <person name="Ohno T."/>
            <person name="Kodaira H."/>
            <person name="Nishiyama Y."/>
            <person name="Kawaguchi Y."/>
        </authorList>
    </citation>
    <scope>FUNCTION IN PHOSPHORYLATION OF UL31; ICP22 AND US9</scope>
    <source>
        <strain>F</strain>
    </source>
</reference>
<reference key="6">
    <citation type="journal article" date="2006" name="J. Virol.">
        <title>Herpes simplex virus 1-encoded protein kinase UL13 phosphorylates viral Us3 protein kinase and regulates nuclear localization of viral envelopment factors UL34 and UL31.</title>
        <authorList>
            <person name="Kato A."/>
            <person name="Yamamoto M."/>
            <person name="Ohno T."/>
            <person name="Tanaka M."/>
            <person name="Sata T."/>
            <person name="Nishiyama Y."/>
            <person name="Kawaguchi Y."/>
        </authorList>
    </citation>
    <scope>PHOSPHORYLATION BY UL13</scope>
    <source>
        <strain>F</strain>
    </source>
</reference>
<reference key="7">
    <citation type="journal article" date="2007" name="J. Virol.">
        <title>Emerin is hyperphosphorylated and redistributed in herpes simplex virus type 1-infected cells in a manner dependent on both UL34 and US3.</title>
        <authorList>
            <person name="Leach N."/>
            <person name="Bjerke S.L."/>
            <person name="Christensen D.K."/>
            <person name="Bouchard J.M."/>
            <person name="Mou F."/>
            <person name="Park R."/>
            <person name="Baines J."/>
            <person name="Haraguchi T."/>
            <person name="Roller R.J."/>
        </authorList>
    </citation>
    <scope>FUNCTION</scope>
</reference>
<reference key="8">
    <citation type="journal article" date="2008" name="J. Virol.">
        <title>Identification of a physiological phosphorylation site of the herpes simplex virus 1-encoded protein kinase Us3 which regulates its optimal catalytic activity in vitro and influences its function in infected cells.</title>
        <authorList>
            <person name="Kato A."/>
            <person name="Tanaka M."/>
            <person name="Yamamoto M."/>
            <person name="Asai R."/>
            <person name="Sata T."/>
            <person name="Nishiyama Y."/>
            <person name="Kawaguchi Y."/>
        </authorList>
    </citation>
    <scope>AUTOPHOSPHORYLATION</scope>
    <source>
        <strain>F</strain>
    </source>
</reference>
<reference key="9">
    <citation type="journal article" date="2009" name="J. Virol.">
        <title>Phosphorylation of the UL31 protein of herpes simplex virus 1 by the US3-encoded kinase regulates localization of the nuclear envelopment complex and egress of nucleocapsids.</title>
        <authorList>
            <person name="Mou F."/>
            <person name="Wills E."/>
            <person name="Baines J.D."/>
        </authorList>
    </citation>
    <scope>FUNCTION</scope>
    <source>
        <strain>F</strain>
    </source>
</reference>
<reference key="10">
    <citation type="journal article" date="2009" name="J. Virol.">
        <title>Regulation of the catalytic activity of herpes simplex virus 1 protein kinase Us3 by autophosphorylation and its role in pathogenesis.</title>
        <authorList>
            <person name="Sagou K."/>
            <person name="Imai T."/>
            <person name="Sagara H."/>
            <person name="Uema M."/>
            <person name="Kawaguchi Y."/>
        </authorList>
    </citation>
    <scope>MUTAGENESIS OF SER-147</scope>
</reference>
<reference key="11">
    <citation type="journal article" date="2010" name="J. Virol.">
        <title>Effects of phosphorylation of herpes simplex virus 1 envelope glycoprotein B by Us3 kinase in vivo and in vitro.</title>
        <authorList>
            <person name="Imai T."/>
            <person name="Sagou K."/>
            <person name="Arii J."/>
            <person name="Kawaguchi Y."/>
        </authorList>
    </citation>
    <scope>FUNCTION IN PHOSPHORYLATION OF GLYCOPROTEIN B</scope>
</reference>
<reference key="12">
    <citation type="journal article" date="2010" name="J. Virol.">
        <title>Hyperphosphorylation of histone deacetylase 2 by alphaherpesvirus US3 kinases.</title>
        <authorList>
            <person name="Walters M.S."/>
            <person name="Kinchington P.R."/>
            <person name="Banfield B.W."/>
            <person name="Silverstein S."/>
        </authorList>
    </citation>
    <scope>FUNCTION IN PHOSPHORYLATION OF HOST HDAC2</scope>
</reference>
<reference key="13">
    <citation type="journal article" date="2011" name="J. Virol.">
        <title>The alphaherpesvirus US3/ORF66 protein kinases direct phosphorylation of the nuclear matrix protein matrin 3.</title>
        <authorList>
            <person name="Erazo A."/>
            <person name="Yee M.B."/>
            <person name="Banfield B.W."/>
            <person name="Kinchington P.R."/>
        </authorList>
    </citation>
    <scope>FUNCTION IN PHOSPHORYLATION OF HOST MATR3</scope>
    <source>
        <strain>RC</strain>
    </source>
</reference>
<reference key="14">
    <citation type="journal article" date="2013" name="J. Virol.">
        <title>Herpes simplex virus 1 serine/threonine kinase US3 hyperphosphorylates IRF3 and inhibits beta interferon production.</title>
        <authorList>
            <person name="Wang S."/>
            <person name="Wang K."/>
            <person name="Lin R."/>
            <person name="Zheng C."/>
        </authorList>
    </citation>
    <scope>FUNCTION</scope>
    <scope>CATALYTIC ACTIVITY</scope>
    <scope>MUTAGENESIS OF LYS-220</scope>
</reference>
<reference key="15">
    <citation type="journal article" date="2014" name="J. Virol.">
        <title>Herpes simplex virus 1 protein kinase US3 hyperphosphorylates p65/RelA and dampens NF-kappaB activation.</title>
        <authorList>
            <person name="Wang K."/>
            <person name="Ni L."/>
            <person name="Wang S."/>
            <person name="Zheng C."/>
        </authorList>
    </citation>
    <scope>FUNCTION</scope>
    <scope>CATALYTIC ACTIVITY</scope>
    <scope>MUTAGENESIS OF LYS-220 AND ASP-305</scope>
    <scope>SUBCELLULAR LOCATION</scope>
</reference>
<reference key="16">
    <citation type="journal article" date="2015" name="J. Biol. Chem.">
        <title>The Us3 Protein of Herpes Simplex Virus 1 Inhibits T Cell Signaling by Confining Linker for Activation of T Cells (LAT) Activation via TRAF6 Protein.</title>
        <authorList>
            <person name="Yang Y."/>
            <person name="Wu S."/>
            <person name="Wang Y."/>
            <person name="Pan S."/>
            <person name="Lan B."/>
            <person name="Liu Y."/>
            <person name="Zhang L."/>
            <person name="Leng Q."/>
            <person name="Chen D."/>
            <person name="Zhang C."/>
            <person name="He B."/>
            <person name="Cao Y."/>
        </authorList>
    </citation>
    <scope>FUNCTION</scope>
    <scope>INTERACTION WITH HOST LAT</scope>
</reference>
<reference key="17">
    <citation type="journal article" date="2019" name="F1000Research">
        <title>Nuclear envelope impairment is facilitated by the herpes simplex virus 1 Us3 kinase.</title>
        <authorList>
            <person name="Wild P."/>
            <person name="Leisinger S."/>
            <person name="de Oliveira A.P."/>
            <person name="Doehner J."/>
            <person name="Schraner E.M."/>
            <person name="Fraevel C."/>
            <person name="Ackermann M."/>
            <person name="Kaech A."/>
        </authorList>
    </citation>
    <scope>FUNCTION</scope>
</reference>
<reference key="18">
    <citation type="journal article" date="2020" name="Cell Rep.">
        <title>Virus-Mediated Suppression of the Antigen Presentation Molecule MR1.</title>
        <authorList>
            <person name="McSharry B.P."/>
            <person name="Samer C."/>
            <person name="McWilliam H.E.G."/>
            <person name="Ashley C.L."/>
            <person name="Yee M.B."/>
            <person name="Steain M."/>
            <person name="Liu L."/>
            <person name="Fairlie D.P."/>
            <person name="Kinchington P.R."/>
            <person name="McCluskey J."/>
            <person name="Abendroth A."/>
            <person name="Villadangos J.A."/>
            <person name="Rossjohn J."/>
            <person name="Slobedman B."/>
        </authorList>
    </citation>
    <scope>FUNCTION</scope>
</reference>
<reference key="19">
    <citation type="journal article" date="2020" name="J. Virol.">
        <title>beta-Catenin Is Required for the cGAS/STING Signaling Pathway but Antagonized by the Herpes Simplex Virus 1 US3 Protein.</title>
        <authorList>
            <person name="You H."/>
            <person name="Lin Y."/>
            <person name="Lin F."/>
            <person name="Yang M."/>
            <person name="Li J."/>
            <person name="Zhang R."/>
            <person name="Huang Z."/>
            <person name="Shen Q."/>
            <person name="Tang R."/>
            <person name="Zheng C."/>
        </authorList>
    </citation>
    <scope>FUNCTION</scope>
    <scope>CATALYTIC ACTIVITY</scope>
</reference>
<reference key="20">
    <citation type="journal article" date="2022" name="J. Virol.">
        <title>The US3 Kinase of Herpes Simplex Virus Phosphorylates the RNA Sensor RIG-I To Suppress Innate Immunity.</title>
        <authorList>
            <person name="van Gent M."/>
            <person name="Chiang J.J."/>
            <person name="Muppala S."/>
            <person name="Chiang C."/>
            <person name="Azab W."/>
            <person name="Kattenhorn L."/>
            <person name="Knipe D.M."/>
            <person name="Osterrieder N."/>
            <person name="Gack M.U."/>
        </authorList>
    </citation>
    <scope>FUNCTION</scope>
    <scope>CATALYTIC ACTIVITY</scope>
    <scope>MUTAGENESIS OF LYS-220</scope>
</reference>
<proteinExistence type="evidence at protein level"/>
<organism>
    <name type="scientific">Human herpesvirus 1 (strain 17)</name>
    <name type="common">HHV-1</name>
    <name type="synonym">Human herpes simplex virus 1</name>
    <dbReference type="NCBI Taxonomy" id="10299"/>
    <lineage>
        <taxon>Viruses</taxon>
        <taxon>Duplodnaviria</taxon>
        <taxon>Heunggongvirae</taxon>
        <taxon>Peploviricota</taxon>
        <taxon>Herviviricetes</taxon>
        <taxon>Herpesvirales</taxon>
        <taxon>Orthoherpesviridae</taxon>
        <taxon>Alphaherpesvirinae</taxon>
        <taxon>Simplexvirus</taxon>
        <taxon>Simplexvirus humanalpha1</taxon>
        <taxon>Human herpesvirus 1</taxon>
    </lineage>
</organism>
<sequence length="481" mass="52835">MACRKFCRVYGGQGRRKEEAVPPETKPSRVFPHGPFYTPAEDACLDSPPPETPKPSHTTPPSEAERLCHLQEILAQMYGNQDYPIEDDPSADAADDVDEDAPDDVAYPEEYAEELFLPGDATGPLIGANDHIPPPCGASPPGIRRRSRDEIGATGFTAEELDAMDREAARAISRGGKPPSTMAKLVTGMGFTIHGALTPGSEGCVFDSSHPDYPQRVIVKAGWYTSTSHEARLLRRLDHPAILPLLDLHVVSGVTCLVLPKYQADLYTYLSRRLNPLGRPQIAAVSRQLLSAVDYIHRQGIIHRDIKTENIFINTPEDICLGDFGAACFVQGSRSSPFPYGIAGTIDTNAPEVLAGDPYTTTVDIWSAGLVIFETAVHNASLFSAPRGPKRGPCDSQITRIIRQAQVHVDEFSPHPESRLTSRYRSRAAGNNRPPYTRPAWTRYYKMDIDVEYLVCKALTFDGALRPSAAELLCLPLFQQK</sequence>
<name>US03_HHV11</name>
<comment type="function">
    <text evidence="5 7 8 9 11 12 13 14 15 16 17 18 19 20 21">Multifunctional serine/threonine kinase that plays a role in several processes including egress of virus particles from the nucleus, modulation of the actin cytoskeleton and inhibition of host immune response (PubMed:25907557, PubMed:31249678, PubMed:34935440). Phosphorylates UL31 and UL34, two critical regulators of capsid budding from nucleus to endoplasmic reticulum, thereby facilitating virion egress (PubMed:15994828, PubMed:1656069). Modulates and redistributes host components of the nuclear envelope, including LMNA, emerin/EMD and the nuclear matrix protein MATR3 (PubMed:20962082). In turn, facilitates nuclear pore impairment and capsid release through impaired nuclear envelope (PubMed:31249678). Phosphorylates envelope glycoprotein B (gB), probably to direct it to the cell surface (PubMed:19846518). Promotes virus intracellular spread by restructuring host cell cytoskeleton. Blocks host apoptosis to extend cell survival and allow efficient viral replication. Promotes viral gene expression by phosphorylating host HDAC2 to reduce viral genome silencing (PubMed:20660201). Strongly inhibits TCR-activated signal transduction in T-cells by reducing the ubiquitination of LAT and TRAF6, leading to a suboptimal activation of LAT (PubMed:25907557). Subverts host antiviral innate immunity by inhibiting type I interferon production through hyperphosphorylation of beta-catenin/CTNNB1 (PubMed:31801859). In addition, phosphorylates the RNA sensor RIGI and the transcription factor IRF3 to prevent the RLR-mediated antiviral signaling pathway (PubMed:24049179, PubMed:34935440). Hyperphosphorylates host RELA and thereby dampens NF-kappa-B signaling (PubMed:24807716). Acts as an immunoevasin partly responsible for inhibition of MR1 expression and antigen presentation in response to bacterial infection.</text>
</comment>
<comment type="catalytic activity">
    <reaction evidence="14 20">
        <text>L-seryl-[protein] + ATP = O-phospho-L-seryl-[protein] + ADP + H(+)</text>
        <dbReference type="Rhea" id="RHEA:17989"/>
        <dbReference type="Rhea" id="RHEA-COMP:9863"/>
        <dbReference type="Rhea" id="RHEA-COMP:11604"/>
        <dbReference type="ChEBI" id="CHEBI:15378"/>
        <dbReference type="ChEBI" id="CHEBI:29999"/>
        <dbReference type="ChEBI" id="CHEBI:30616"/>
        <dbReference type="ChEBI" id="CHEBI:83421"/>
        <dbReference type="ChEBI" id="CHEBI:456216"/>
        <dbReference type="EC" id="2.7.11.1"/>
    </reaction>
</comment>
<comment type="catalytic activity">
    <reaction evidence="18">
        <text>L-threonyl-[protein] + ATP = O-phospho-L-threonyl-[protein] + ADP + H(+)</text>
        <dbReference type="Rhea" id="RHEA:46608"/>
        <dbReference type="Rhea" id="RHEA-COMP:11060"/>
        <dbReference type="Rhea" id="RHEA-COMP:11605"/>
        <dbReference type="ChEBI" id="CHEBI:15378"/>
        <dbReference type="ChEBI" id="CHEBI:30013"/>
        <dbReference type="ChEBI" id="CHEBI:30616"/>
        <dbReference type="ChEBI" id="CHEBI:61977"/>
        <dbReference type="ChEBI" id="CHEBI:456216"/>
        <dbReference type="EC" id="2.7.11.1"/>
    </reaction>
</comment>
<comment type="subunit">
    <text evidence="16">Interacts with host LAT; this interaction prevents LAT activation of TRAF6 (PubMed:25907557).</text>
</comment>
<comment type="subcellular location">
    <subcellularLocation>
        <location evidence="15">Host cytoplasm</location>
    </subcellularLocation>
    <subcellularLocation>
        <location evidence="1">Host nucleus</location>
    </subcellularLocation>
</comment>
<comment type="PTM">
    <text evidence="6">Phosphorylated by UL13; this phosphorylation regulates subsequent phosphorylation of UL31 and UL34 by US3. Autophosphorylated.</text>
</comment>
<comment type="similarity">
    <text evidence="2">Belongs to the protein kinase superfamily. Ser/Thr protein kinase family.</text>
</comment>
<gene>
    <name type="primary">US3</name>
</gene>
<protein>
    <recommendedName>
        <fullName>Serine/threonine-protein kinase US3</fullName>
        <ecNumber>2.7.11.1</ecNumber>
    </recommendedName>
</protein>
<feature type="chain" id="PRO_0000086180" description="Serine/threonine-protein kinase US3">
    <location>
        <begin position="1"/>
        <end position="481"/>
    </location>
</feature>
<feature type="domain" description="Protein kinase" evidence="2">
    <location>
        <begin position="191"/>
        <end position="478"/>
    </location>
</feature>
<feature type="region of interest" description="Disordered" evidence="4">
    <location>
        <begin position="12"/>
        <end position="63"/>
    </location>
</feature>
<feature type="active site" description="Proton acceptor" evidence="2 3">
    <location>
        <position position="305"/>
    </location>
</feature>
<feature type="binding site" evidence="2">
    <location>
        <begin position="197"/>
        <end position="205"/>
    </location>
    <ligand>
        <name>ATP</name>
        <dbReference type="ChEBI" id="CHEBI:30616"/>
    </ligand>
</feature>
<feature type="binding site" evidence="2">
    <location>
        <position position="220"/>
    </location>
    <ligand>
        <name>ATP</name>
        <dbReference type="ChEBI" id="CHEBI:30616"/>
    </ligand>
</feature>
<feature type="mutagenesis site" description="Complete loss of autophosphorylation." evidence="10">
    <original>S</original>
    <variation>A</variation>
    <location>
        <position position="147"/>
    </location>
</feature>
<feature type="mutagenesis site" description="Abolishes kinase activity." evidence="14 15 20">
    <original>K</original>
    <variation>M</variation>
    <location>
        <position position="220"/>
    </location>
</feature>
<feature type="mutagenesis site" description="Abolishes kinase activity." evidence="15">
    <original>D</original>
    <variation>A</variation>
    <location>
        <position position="305"/>
    </location>
</feature>
<evidence type="ECO:0000250" key="1"/>
<evidence type="ECO:0000255" key="2">
    <source>
        <dbReference type="PROSITE-ProRule" id="PRU00159"/>
    </source>
</evidence>
<evidence type="ECO:0000255" key="3">
    <source>
        <dbReference type="PROSITE-ProRule" id="PRU10027"/>
    </source>
</evidence>
<evidence type="ECO:0000256" key="4">
    <source>
        <dbReference type="SAM" id="MobiDB-lite"/>
    </source>
</evidence>
<evidence type="ECO:0000269" key="5">
    <source>
    </source>
</evidence>
<evidence type="ECO:0000269" key="6">
    <source>
    </source>
</evidence>
<evidence type="ECO:0000269" key="7">
    <source>
    </source>
</evidence>
<evidence type="ECO:0000269" key="8">
    <source>
    </source>
</evidence>
<evidence type="ECO:0000269" key="9">
    <source>
    </source>
</evidence>
<evidence type="ECO:0000269" key="10">
    <source>
    </source>
</evidence>
<evidence type="ECO:0000269" key="11">
    <source>
    </source>
</evidence>
<evidence type="ECO:0000269" key="12">
    <source>
    </source>
</evidence>
<evidence type="ECO:0000269" key="13">
    <source>
    </source>
</evidence>
<evidence type="ECO:0000269" key="14">
    <source>
    </source>
</evidence>
<evidence type="ECO:0000269" key="15">
    <source>
    </source>
</evidence>
<evidence type="ECO:0000269" key="16">
    <source>
    </source>
</evidence>
<evidence type="ECO:0000269" key="17">
    <source>
    </source>
</evidence>
<evidence type="ECO:0000269" key="18">
    <source>
    </source>
</evidence>
<evidence type="ECO:0000269" key="19">
    <source>
    </source>
</evidence>
<evidence type="ECO:0000269" key="20">
    <source>
    </source>
</evidence>
<evidence type="ECO:0000269" key="21">
    <source>
    </source>
</evidence>
<organismHost>
    <name type="scientific">Homo sapiens</name>
    <name type="common">Human</name>
    <dbReference type="NCBI Taxonomy" id="9606"/>
</organismHost>
<dbReference type="EC" id="2.7.11.1"/>
<dbReference type="EMBL" id="L00036">
    <property type="protein sequence ID" value="AAA96685.1"/>
    <property type="molecule type" value="Genomic_DNA"/>
</dbReference>
<dbReference type="EMBL" id="X14112">
    <property type="protein sequence ID" value="CAA32280.1"/>
    <property type="molecule type" value="Genomic_DNA"/>
</dbReference>
<dbReference type="EMBL" id="X02138">
    <property type="protein sequence ID" value="CAA26057.1"/>
    <property type="molecule type" value="Genomic_DNA"/>
</dbReference>
<dbReference type="PIR" id="A00656">
    <property type="entry name" value="TVBE17"/>
</dbReference>
<dbReference type="RefSeq" id="YP_009137138.1">
    <property type="nucleotide sequence ID" value="NC_001806.2"/>
</dbReference>
<dbReference type="SMR" id="P04413"/>
<dbReference type="BioGRID" id="971434">
    <property type="interactions" value="34"/>
</dbReference>
<dbReference type="IntAct" id="P04413">
    <property type="interactions" value="29"/>
</dbReference>
<dbReference type="iPTMnet" id="P04413"/>
<dbReference type="DNASU" id="2703401"/>
<dbReference type="GeneID" id="2703401"/>
<dbReference type="KEGG" id="vg:2703401"/>
<dbReference type="Proteomes" id="UP000009294">
    <property type="component" value="Segment"/>
</dbReference>
<dbReference type="GO" id="GO:0030430">
    <property type="term" value="C:host cell cytoplasm"/>
    <property type="evidence" value="ECO:0000314"/>
    <property type="project" value="UniProt"/>
</dbReference>
<dbReference type="GO" id="GO:0042025">
    <property type="term" value="C:host cell nucleus"/>
    <property type="evidence" value="ECO:0007669"/>
    <property type="project" value="UniProtKB-SubCell"/>
</dbReference>
<dbReference type="GO" id="GO:0019033">
    <property type="term" value="C:viral tegument"/>
    <property type="evidence" value="ECO:0000314"/>
    <property type="project" value="CACAO"/>
</dbReference>
<dbReference type="GO" id="GO:0005524">
    <property type="term" value="F:ATP binding"/>
    <property type="evidence" value="ECO:0007669"/>
    <property type="project" value="UniProtKB-KW"/>
</dbReference>
<dbReference type="GO" id="GO:0140311">
    <property type="term" value="F:protein sequestering activity"/>
    <property type="evidence" value="ECO:0000314"/>
    <property type="project" value="UniProt"/>
</dbReference>
<dbReference type="GO" id="GO:0106310">
    <property type="term" value="F:protein serine kinase activity"/>
    <property type="evidence" value="ECO:0007669"/>
    <property type="project" value="RHEA"/>
</dbReference>
<dbReference type="GO" id="GO:0004674">
    <property type="term" value="F:protein serine/threonine kinase activity"/>
    <property type="evidence" value="ECO:0000314"/>
    <property type="project" value="UniProt"/>
</dbReference>
<dbReference type="GO" id="GO:0042308">
    <property type="term" value="P:negative regulation of protein import into nucleus"/>
    <property type="evidence" value="ECO:0000314"/>
    <property type="project" value="UniProt"/>
</dbReference>
<dbReference type="GO" id="GO:1900181">
    <property type="term" value="P:negative regulation of protein localization to nucleus"/>
    <property type="evidence" value="ECO:0000314"/>
    <property type="project" value="UniProt"/>
</dbReference>
<dbReference type="GO" id="GO:0052150">
    <property type="term" value="P:symbiont-mediated perturbation of host apoptosis"/>
    <property type="evidence" value="ECO:0007669"/>
    <property type="project" value="UniProtKB-KW"/>
</dbReference>
<dbReference type="GO" id="GO:0039525">
    <property type="term" value="P:symbiont-mediated perturbation of host chromatin organization"/>
    <property type="evidence" value="ECO:0007669"/>
    <property type="project" value="UniProtKB-KW"/>
</dbReference>
<dbReference type="GO" id="GO:0039537">
    <property type="term" value="P:symbiont-mediated suppression of cytoplasmic pattern recognition receptor signaling pathway"/>
    <property type="evidence" value="ECO:0000314"/>
    <property type="project" value="UniProt"/>
</dbReference>
<dbReference type="GO" id="GO:0039540">
    <property type="term" value="P:symbiont-mediated suppression of host cytoplasmic pattern recognition receptor signaling pathway via inhibition of RIG-I activity"/>
    <property type="evidence" value="ECO:0000314"/>
    <property type="project" value="UniProt"/>
</dbReference>
<dbReference type="GO" id="GO:0085034">
    <property type="term" value="P:symbiont-mediated suppression of host NF-kappaB cascade"/>
    <property type="evidence" value="ECO:0000314"/>
    <property type="project" value="UniProt"/>
</dbReference>
<dbReference type="GO" id="GO:0052085">
    <property type="term" value="P:symbiont-mediated suppression of host T-cell mediated immune response"/>
    <property type="evidence" value="ECO:0000314"/>
    <property type="project" value="UniProt"/>
</dbReference>
<dbReference type="CDD" id="cd00180">
    <property type="entry name" value="PKc"/>
    <property type="match status" value="1"/>
</dbReference>
<dbReference type="Gene3D" id="1.10.510.10">
    <property type="entry name" value="Transferase(Phosphotransferase) domain 1"/>
    <property type="match status" value="1"/>
</dbReference>
<dbReference type="InterPro" id="IPR011009">
    <property type="entry name" value="Kinase-like_dom_sf"/>
</dbReference>
<dbReference type="InterPro" id="IPR050660">
    <property type="entry name" value="NEK_Ser/Thr_kinase"/>
</dbReference>
<dbReference type="InterPro" id="IPR000719">
    <property type="entry name" value="Prot_kinase_dom"/>
</dbReference>
<dbReference type="InterPro" id="IPR008271">
    <property type="entry name" value="Ser/Thr_kinase_AS"/>
</dbReference>
<dbReference type="PANTHER" id="PTHR43671:SF103">
    <property type="entry name" value="KINASE, PUTATIVE-RELATED"/>
    <property type="match status" value="1"/>
</dbReference>
<dbReference type="PANTHER" id="PTHR43671">
    <property type="entry name" value="SERINE/THREONINE-PROTEIN KINASE NEK"/>
    <property type="match status" value="1"/>
</dbReference>
<dbReference type="Pfam" id="PF00069">
    <property type="entry name" value="Pkinase"/>
    <property type="match status" value="1"/>
</dbReference>
<dbReference type="SMART" id="SM00220">
    <property type="entry name" value="S_TKc"/>
    <property type="match status" value="1"/>
</dbReference>
<dbReference type="SUPFAM" id="SSF56112">
    <property type="entry name" value="Protein kinase-like (PK-like)"/>
    <property type="match status" value="1"/>
</dbReference>
<dbReference type="PROSITE" id="PS50011">
    <property type="entry name" value="PROTEIN_KINASE_DOM"/>
    <property type="match status" value="1"/>
</dbReference>
<dbReference type="PROSITE" id="PS00108">
    <property type="entry name" value="PROTEIN_KINASE_ST"/>
    <property type="match status" value="1"/>
</dbReference>
<accession>P04413</accession>
<keyword id="KW-0067">ATP-binding</keyword>
<keyword id="KW-1035">Host cytoplasm</keyword>
<keyword id="KW-1048">Host nucleus</keyword>
<keyword id="KW-0945">Host-virus interaction</keyword>
<keyword id="KW-0418">Kinase</keyword>
<keyword id="KW-1119">Modulation of host cell apoptosis by virus</keyword>
<keyword id="KW-1122">Modulation of host chromatin by virus</keyword>
<keyword id="KW-0547">Nucleotide-binding</keyword>
<keyword id="KW-0597">Phosphoprotein</keyword>
<keyword id="KW-1185">Reference proteome</keyword>
<keyword id="KW-0723">Serine/threonine-protein kinase</keyword>
<keyword id="KW-0808">Transferase</keyword>